<dbReference type="EC" id="3.1.26.4" evidence="1"/>
<dbReference type="EMBL" id="CP000668">
    <property type="protein sequence ID" value="ABP40016.1"/>
    <property type="molecule type" value="Genomic_DNA"/>
</dbReference>
<dbReference type="RefSeq" id="WP_002210699.1">
    <property type="nucleotide sequence ID" value="NZ_CP009715.1"/>
</dbReference>
<dbReference type="SMR" id="A4TL54"/>
<dbReference type="GeneID" id="57977475"/>
<dbReference type="KEGG" id="ypp:YPDSF_1631"/>
<dbReference type="PATRIC" id="fig|386656.14.peg.2132"/>
<dbReference type="GO" id="GO:0005737">
    <property type="term" value="C:cytoplasm"/>
    <property type="evidence" value="ECO:0007669"/>
    <property type="project" value="UniProtKB-SubCell"/>
</dbReference>
<dbReference type="GO" id="GO:0000287">
    <property type="term" value="F:magnesium ion binding"/>
    <property type="evidence" value="ECO:0007669"/>
    <property type="project" value="UniProtKB-UniRule"/>
</dbReference>
<dbReference type="GO" id="GO:0003676">
    <property type="term" value="F:nucleic acid binding"/>
    <property type="evidence" value="ECO:0007669"/>
    <property type="project" value="InterPro"/>
</dbReference>
<dbReference type="GO" id="GO:0004523">
    <property type="term" value="F:RNA-DNA hybrid ribonuclease activity"/>
    <property type="evidence" value="ECO:0007669"/>
    <property type="project" value="UniProtKB-UniRule"/>
</dbReference>
<dbReference type="GO" id="GO:0043137">
    <property type="term" value="P:DNA replication, removal of RNA primer"/>
    <property type="evidence" value="ECO:0007669"/>
    <property type="project" value="TreeGrafter"/>
</dbReference>
<dbReference type="CDD" id="cd09278">
    <property type="entry name" value="RNase_HI_prokaryote_like"/>
    <property type="match status" value="1"/>
</dbReference>
<dbReference type="FunFam" id="3.30.420.10:FF:000008">
    <property type="entry name" value="Ribonuclease H"/>
    <property type="match status" value="1"/>
</dbReference>
<dbReference type="Gene3D" id="3.30.420.10">
    <property type="entry name" value="Ribonuclease H-like superfamily/Ribonuclease H"/>
    <property type="match status" value="1"/>
</dbReference>
<dbReference type="HAMAP" id="MF_00042">
    <property type="entry name" value="RNase_H"/>
    <property type="match status" value="1"/>
</dbReference>
<dbReference type="InterPro" id="IPR050092">
    <property type="entry name" value="RNase_H"/>
</dbReference>
<dbReference type="InterPro" id="IPR012337">
    <property type="entry name" value="RNaseH-like_sf"/>
</dbReference>
<dbReference type="InterPro" id="IPR002156">
    <property type="entry name" value="RNaseH_domain"/>
</dbReference>
<dbReference type="InterPro" id="IPR036397">
    <property type="entry name" value="RNaseH_sf"/>
</dbReference>
<dbReference type="InterPro" id="IPR022892">
    <property type="entry name" value="RNaseHI"/>
</dbReference>
<dbReference type="NCBIfam" id="NF001236">
    <property type="entry name" value="PRK00203.1"/>
    <property type="match status" value="1"/>
</dbReference>
<dbReference type="PANTHER" id="PTHR10642">
    <property type="entry name" value="RIBONUCLEASE H1"/>
    <property type="match status" value="1"/>
</dbReference>
<dbReference type="PANTHER" id="PTHR10642:SF26">
    <property type="entry name" value="RIBONUCLEASE H1"/>
    <property type="match status" value="1"/>
</dbReference>
<dbReference type="Pfam" id="PF00075">
    <property type="entry name" value="RNase_H"/>
    <property type="match status" value="1"/>
</dbReference>
<dbReference type="SUPFAM" id="SSF53098">
    <property type="entry name" value="Ribonuclease H-like"/>
    <property type="match status" value="1"/>
</dbReference>
<dbReference type="PROSITE" id="PS50879">
    <property type="entry name" value="RNASE_H_1"/>
    <property type="match status" value="1"/>
</dbReference>
<comment type="function">
    <text evidence="1">Endonuclease that specifically degrades the RNA of RNA-DNA hybrids.</text>
</comment>
<comment type="catalytic activity">
    <reaction evidence="1">
        <text>Endonucleolytic cleavage to 5'-phosphomonoester.</text>
        <dbReference type="EC" id="3.1.26.4"/>
    </reaction>
</comment>
<comment type="cofactor">
    <cofactor evidence="1">
        <name>Mg(2+)</name>
        <dbReference type="ChEBI" id="CHEBI:18420"/>
    </cofactor>
    <text evidence="1">Binds 1 Mg(2+) ion per subunit. May bind a second metal ion at a regulatory site, or after substrate binding.</text>
</comment>
<comment type="subunit">
    <text evidence="1">Monomer.</text>
</comment>
<comment type="subcellular location">
    <subcellularLocation>
        <location evidence="1">Cytoplasm</location>
    </subcellularLocation>
</comment>
<comment type="similarity">
    <text evidence="1">Belongs to the RNase H family.</text>
</comment>
<organism>
    <name type="scientific">Yersinia pestis (strain Pestoides F)</name>
    <dbReference type="NCBI Taxonomy" id="386656"/>
    <lineage>
        <taxon>Bacteria</taxon>
        <taxon>Pseudomonadati</taxon>
        <taxon>Pseudomonadota</taxon>
        <taxon>Gammaproteobacteria</taxon>
        <taxon>Enterobacterales</taxon>
        <taxon>Yersiniaceae</taxon>
        <taxon>Yersinia</taxon>
    </lineage>
</organism>
<keyword id="KW-0963">Cytoplasm</keyword>
<keyword id="KW-0255">Endonuclease</keyword>
<keyword id="KW-0378">Hydrolase</keyword>
<keyword id="KW-0460">Magnesium</keyword>
<keyword id="KW-0479">Metal-binding</keyword>
<keyword id="KW-0540">Nuclease</keyword>
<sequence>MTKQVEIFTDGSCLGNPGPGGYGAILRYKQHEKTFSAGYYLTTNNRMELMAAIVALEALTSPCEVTLSTDSQYVRQGITQWIHNWKKRGWKTADRKPVRNVDLWQRLDLAIQSHTIQWEWVKGHAGHPENERCDELARQGANSPTLDDTGYNPD</sequence>
<gene>
    <name evidence="1" type="primary">rnhA</name>
    <name type="ordered locus">YPDSF_1631</name>
</gene>
<proteinExistence type="inferred from homology"/>
<reference key="1">
    <citation type="submission" date="2007-02" db="EMBL/GenBank/DDBJ databases">
        <title>Complete sequence of chromosome of Yersinia pestis Pestoides F.</title>
        <authorList>
            <consortium name="US DOE Joint Genome Institute"/>
            <person name="Copeland A."/>
            <person name="Lucas S."/>
            <person name="Lapidus A."/>
            <person name="Barry K."/>
            <person name="Detter J.C."/>
            <person name="Glavina del Rio T."/>
            <person name="Hammon N."/>
            <person name="Israni S."/>
            <person name="Dalin E."/>
            <person name="Tice H."/>
            <person name="Pitluck S."/>
            <person name="Di Bartolo G."/>
            <person name="Chain P."/>
            <person name="Malfatti S."/>
            <person name="Shin M."/>
            <person name="Vergez L."/>
            <person name="Schmutz J."/>
            <person name="Larimer F."/>
            <person name="Land M."/>
            <person name="Hauser L."/>
            <person name="Worsham P."/>
            <person name="Chu M."/>
            <person name="Bearden S."/>
            <person name="Garcia E."/>
            <person name="Richardson P."/>
        </authorList>
    </citation>
    <scope>NUCLEOTIDE SEQUENCE [LARGE SCALE GENOMIC DNA]</scope>
    <source>
        <strain>Pestoides F</strain>
    </source>
</reference>
<accession>A4TL54</accession>
<evidence type="ECO:0000255" key="1">
    <source>
        <dbReference type="HAMAP-Rule" id="MF_00042"/>
    </source>
</evidence>
<evidence type="ECO:0000255" key="2">
    <source>
        <dbReference type="PROSITE-ProRule" id="PRU00408"/>
    </source>
</evidence>
<name>RNH_YERPP</name>
<protein>
    <recommendedName>
        <fullName evidence="1">Ribonuclease H</fullName>
        <shortName evidence="1">RNase H</shortName>
        <ecNumber evidence="1">3.1.26.4</ecNumber>
    </recommendedName>
</protein>
<feature type="chain" id="PRO_1000074688" description="Ribonuclease H">
    <location>
        <begin position="1"/>
        <end position="154"/>
    </location>
</feature>
<feature type="domain" description="RNase H type-1" evidence="2">
    <location>
        <begin position="1"/>
        <end position="142"/>
    </location>
</feature>
<feature type="binding site" evidence="1">
    <location>
        <position position="10"/>
    </location>
    <ligand>
        <name>Mg(2+)</name>
        <dbReference type="ChEBI" id="CHEBI:18420"/>
        <label>1</label>
    </ligand>
</feature>
<feature type="binding site" evidence="1">
    <location>
        <position position="10"/>
    </location>
    <ligand>
        <name>Mg(2+)</name>
        <dbReference type="ChEBI" id="CHEBI:18420"/>
        <label>2</label>
    </ligand>
</feature>
<feature type="binding site" evidence="1">
    <location>
        <position position="48"/>
    </location>
    <ligand>
        <name>Mg(2+)</name>
        <dbReference type="ChEBI" id="CHEBI:18420"/>
        <label>1</label>
    </ligand>
</feature>
<feature type="binding site" evidence="1">
    <location>
        <position position="70"/>
    </location>
    <ligand>
        <name>Mg(2+)</name>
        <dbReference type="ChEBI" id="CHEBI:18420"/>
        <label>1</label>
    </ligand>
</feature>
<feature type="binding site" evidence="1">
    <location>
        <position position="134"/>
    </location>
    <ligand>
        <name>Mg(2+)</name>
        <dbReference type="ChEBI" id="CHEBI:18420"/>
        <label>2</label>
    </ligand>
</feature>